<name>PUR9_LACCB</name>
<feature type="chain" id="PRO_1000096068" description="Bifunctional purine biosynthesis protein PurH">
    <location>
        <begin position="1"/>
        <end position="507"/>
    </location>
</feature>
<feature type="domain" description="MGS-like" evidence="2">
    <location>
        <begin position="1"/>
        <end position="144"/>
    </location>
</feature>
<comment type="catalytic activity">
    <reaction evidence="1">
        <text>(6R)-10-formyltetrahydrofolate + 5-amino-1-(5-phospho-beta-D-ribosyl)imidazole-4-carboxamide = 5-formamido-1-(5-phospho-D-ribosyl)imidazole-4-carboxamide + (6S)-5,6,7,8-tetrahydrofolate</text>
        <dbReference type="Rhea" id="RHEA:22192"/>
        <dbReference type="ChEBI" id="CHEBI:57453"/>
        <dbReference type="ChEBI" id="CHEBI:58467"/>
        <dbReference type="ChEBI" id="CHEBI:58475"/>
        <dbReference type="ChEBI" id="CHEBI:195366"/>
        <dbReference type="EC" id="2.1.2.3"/>
    </reaction>
</comment>
<comment type="catalytic activity">
    <reaction evidence="1">
        <text>IMP + H2O = 5-formamido-1-(5-phospho-D-ribosyl)imidazole-4-carboxamide</text>
        <dbReference type="Rhea" id="RHEA:18445"/>
        <dbReference type="ChEBI" id="CHEBI:15377"/>
        <dbReference type="ChEBI" id="CHEBI:58053"/>
        <dbReference type="ChEBI" id="CHEBI:58467"/>
        <dbReference type="EC" id="3.5.4.10"/>
    </reaction>
</comment>
<comment type="pathway">
    <text evidence="1">Purine metabolism; IMP biosynthesis via de novo pathway; 5-formamido-1-(5-phospho-D-ribosyl)imidazole-4-carboxamide from 5-amino-1-(5-phospho-D-ribosyl)imidazole-4-carboxamide (10-formyl THF route): step 1/1.</text>
</comment>
<comment type="pathway">
    <text evidence="1">Purine metabolism; IMP biosynthesis via de novo pathway; IMP from 5-formamido-1-(5-phospho-D-ribosyl)imidazole-4-carboxamide: step 1/1.</text>
</comment>
<comment type="domain">
    <text evidence="1">The IMP cyclohydrolase activity resides in the N-terminal region.</text>
</comment>
<comment type="similarity">
    <text evidence="1">Belongs to the PurH family.</text>
</comment>
<keyword id="KW-0378">Hydrolase</keyword>
<keyword id="KW-0511">Multifunctional enzyme</keyword>
<keyword id="KW-0658">Purine biosynthesis</keyword>
<keyword id="KW-0808">Transferase</keyword>
<reference key="1">
    <citation type="submission" date="2008-06" db="EMBL/GenBank/DDBJ databases">
        <title>Lactobacillus casei BL23 complete genome sequence.</title>
        <authorList>
            <person name="Maze A."/>
            <person name="Boel G."/>
            <person name="Bourand A."/>
            <person name="Loux V."/>
            <person name="Gibrat J.F."/>
            <person name="Zuniga M."/>
            <person name="Hartke A."/>
            <person name="Deutscher J."/>
        </authorList>
    </citation>
    <scope>NUCLEOTIDE SEQUENCE [LARGE SCALE GENOMIC DNA]</scope>
    <source>
        <strain>BL23</strain>
    </source>
</reference>
<dbReference type="EC" id="2.1.2.3" evidence="1"/>
<dbReference type="EC" id="3.5.4.10" evidence="1"/>
<dbReference type="EMBL" id="FM177140">
    <property type="protein sequence ID" value="CAQ67044.1"/>
    <property type="molecule type" value="Genomic_DNA"/>
</dbReference>
<dbReference type="SMR" id="B3WF93"/>
<dbReference type="KEGG" id="lcb:LCABL_19660"/>
<dbReference type="HOGENOM" id="CLU_016316_5_2_9"/>
<dbReference type="UniPathway" id="UPA00074">
    <property type="reaction ID" value="UER00133"/>
</dbReference>
<dbReference type="UniPathway" id="UPA00074">
    <property type="reaction ID" value="UER00135"/>
</dbReference>
<dbReference type="GO" id="GO:0005829">
    <property type="term" value="C:cytosol"/>
    <property type="evidence" value="ECO:0007669"/>
    <property type="project" value="TreeGrafter"/>
</dbReference>
<dbReference type="GO" id="GO:0003937">
    <property type="term" value="F:IMP cyclohydrolase activity"/>
    <property type="evidence" value="ECO:0007669"/>
    <property type="project" value="UniProtKB-UniRule"/>
</dbReference>
<dbReference type="GO" id="GO:0004643">
    <property type="term" value="F:phosphoribosylaminoimidazolecarboxamide formyltransferase activity"/>
    <property type="evidence" value="ECO:0007669"/>
    <property type="project" value="UniProtKB-UniRule"/>
</dbReference>
<dbReference type="GO" id="GO:0006189">
    <property type="term" value="P:'de novo' IMP biosynthetic process"/>
    <property type="evidence" value="ECO:0007669"/>
    <property type="project" value="UniProtKB-UniRule"/>
</dbReference>
<dbReference type="CDD" id="cd01421">
    <property type="entry name" value="IMPCH"/>
    <property type="match status" value="1"/>
</dbReference>
<dbReference type="FunFam" id="3.40.140.20:FF:000001">
    <property type="entry name" value="Bifunctional purine biosynthesis protein PurH"/>
    <property type="match status" value="1"/>
</dbReference>
<dbReference type="FunFam" id="3.40.140.20:FF:000002">
    <property type="entry name" value="Bifunctional purine biosynthesis protein PurH"/>
    <property type="match status" value="1"/>
</dbReference>
<dbReference type="FunFam" id="3.40.50.1380:FF:000001">
    <property type="entry name" value="Bifunctional purine biosynthesis protein PurH"/>
    <property type="match status" value="1"/>
</dbReference>
<dbReference type="Gene3D" id="3.40.140.20">
    <property type="match status" value="2"/>
</dbReference>
<dbReference type="Gene3D" id="3.40.50.1380">
    <property type="entry name" value="Methylglyoxal synthase-like domain"/>
    <property type="match status" value="1"/>
</dbReference>
<dbReference type="HAMAP" id="MF_00139">
    <property type="entry name" value="PurH"/>
    <property type="match status" value="1"/>
</dbReference>
<dbReference type="InterPro" id="IPR024051">
    <property type="entry name" value="AICAR_Tfase_dup_dom_sf"/>
</dbReference>
<dbReference type="InterPro" id="IPR016193">
    <property type="entry name" value="Cytidine_deaminase-like"/>
</dbReference>
<dbReference type="InterPro" id="IPR011607">
    <property type="entry name" value="MGS-like_dom"/>
</dbReference>
<dbReference type="InterPro" id="IPR036914">
    <property type="entry name" value="MGS-like_dom_sf"/>
</dbReference>
<dbReference type="InterPro" id="IPR002695">
    <property type="entry name" value="PurH-like"/>
</dbReference>
<dbReference type="NCBIfam" id="NF002049">
    <property type="entry name" value="PRK00881.1"/>
    <property type="match status" value="1"/>
</dbReference>
<dbReference type="NCBIfam" id="TIGR00355">
    <property type="entry name" value="purH"/>
    <property type="match status" value="1"/>
</dbReference>
<dbReference type="PANTHER" id="PTHR11692:SF0">
    <property type="entry name" value="BIFUNCTIONAL PURINE BIOSYNTHESIS PROTEIN ATIC"/>
    <property type="match status" value="1"/>
</dbReference>
<dbReference type="PANTHER" id="PTHR11692">
    <property type="entry name" value="BIFUNCTIONAL PURINE BIOSYNTHESIS PROTEIN PURH"/>
    <property type="match status" value="1"/>
</dbReference>
<dbReference type="Pfam" id="PF01808">
    <property type="entry name" value="AICARFT_IMPCHas"/>
    <property type="match status" value="1"/>
</dbReference>
<dbReference type="Pfam" id="PF02142">
    <property type="entry name" value="MGS"/>
    <property type="match status" value="1"/>
</dbReference>
<dbReference type="PIRSF" id="PIRSF000414">
    <property type="entry name" value="AICARFT_IMPCHas"/>
    <property type="match status" value="1"/>
</dbReference>
<dbReference type="SMART" id="SM00798">
    <property type="entry name" value="AICARFT_IMPCHas"/>
    <property type="match status" value="1"/>
</dbReference>
<dbReference type="SMART" id="SM00851">
    <property type="entry name" value="MGS"/>
    <property type="match status" value="1"/>
</dbReference>
<dbReference type="SUPFAM" id="SSF53927">
    <property type="entry name" value="Cytidine deaminase-like"/>
    <property type="match status" value="1"/>
</dbReference>
<dbReference type="SUPFAM" id="SSF52335">
    <property type="entry name" value="Methylglyoxal synthase-like"/>
    <property type="match status" value="1"/>
</dbReference>
<dbReference type="PROSITE" id="PS51855">
    <property type="entry name" value="MGS"/>
    <property type="match status" value="1"/>
</dbReference>
<protein>
    <recommendedName>
        <fullName evidence="1">Bifunctional purine biosynthesis protein PurH</fullName>
    </recommendedName>
    <domain>
        <recommendedName>
            <fullName evidence="1">Phosphoribosylaminoimidazolecarboxamide formyltransferase</fullName>
            <ecNumber evidence="1">2.1.2.3</ecNumber>
        </recommendedName>
        <alternativeName>
            <fullName evidence="1">AICAR transformylase</fullName>
        </alternativeName>
    </domain>
    <domain>
        <recommendedName>
            <fullName evidence="1">IMP cyclohydrolase</fullName>
            <ecNumber evidence="1">3.5.4.10</ecNumber>
        </recommendedName>
        <alternativeName>
            <fullName evidence="1">ATIC</fullName>
        </alternativeName>
        <alternativeName>
            <fullName evidence="1">IMP synthase</fullName>
        </alternativeName>
        <alternativeName>
            <fullName evidence="1">Inosinicase</fullName>
        </alternativeName>
    </domain>
</protein>
<gene>
    <name evidence="1" type="primary">purH</name>
    <name type="ordered locus">LCABL_19660</name>
</gene>
<evidence type="ECO:0000255" key="1">
    <source>
        <dbReference type="HAMAP-Rule" id="MF_00139"/>
    </source>
</evidence>
<evidence type="ECO:0000255" key="2">
    <source>
        <dbReference type="PROSITE-ProRule" id="PRU01202"/>
    </source>
</evidence>
<sequence length="507" mass="54772">MKRALLSVSDKTGLVSFAKGLIDRGFELVSTGGTHRELAAAGIAVTSVEEVTGFPEMLDGRVKTLHPKIHAGILARRDDPDHMEALANHDIQPVDLVCVNLYPFAATIKRPDVTRAEAIEQIDIGGPSALRAAAKNSDSVWAVVDPADYEAVLTGLDQDDAHLRQKLAAKVFAITAAYDAQIVHYLDPEPFPEHFTPTYTKRQDLRYGENSHQQAAFYVEPDPNPTSLAAAKQLHGKELSYNNIKDADAALAMLREFSEPAVVAVKHMNPCGIGLGKTIEGAWDKAYAADPMSIFGGIIALNRPVDLATAEKMHKLFLEIIIAPAFDDDAYAVLAKKKNVRLLTINTADTPAELGTETTAIYGGLLIQTRDNQTETPADMTVVTTVKPTDEQLKALAFAQTVVKHVKSNAIVVAQADQTLGIGAGQMNRIGSVELALTQAQQNDNFAGAVMASDAFFPMDDCVDYAAKHDIKAIIQPGGSIRDKDSIEKANQYGIAMVTTGVRHFRH</sequence>
<accession>B3WF93</accession>
<organism>
    <name type="scientific">Lacticaseibacillus casei (strain BL23)</name>
    <name type="common">Lactobacillus casei</name>
    <dbReference type="NCBI Taxonomy" id="543734"/>
    <lineage>
        <taxon>Bacteria</taxon>
        <taxon>Bacillati</taxon>
        <taxon>Bacillota</taxon>
        <taxon>Bacilli</taxon>
        <taxon>Lactobacillales</taxon>
        <taxon>Lactobacillaceae</taxon>
        <taxon>Lacticaseibacillus</taxon>
    </lineage>
</organism>
<proteinExistence type="inferred from homology"/>